<evidence type="ECO:0000250" key="1">
    <source>
        <dbReference type="UniProtKB" id="P03271"/>
    </source>
</evidence>
<evidence type="ECO:0000255" key="2">
    <source>
        <dbReference type="HAMAP-Rule" id="MF_04057"/>
    </source>
</evidence>
<evidence type="ECO:0000256" key="3">
    <source>
        <dbReference type="SAM" id="MobiDB-lite"/>
    </source>
</evidence>
<evidence type="ECO:0000269" key="4">
    <source>
    </source>
</evidence>
<evidence type="ECO:0000269" key="5">
    <source>
    </source>
</evidence>
<evidence type="ECO:0000269" key="6">
    <source>
    </source>
</evidence>
<evidence type="ECO:0000269" key="7">
    <source>
    </source>
</evidence>
<evidence type="ECO:0000269" key="8">
    <source>
    </source>
</evidence>
<evidence type="ECO:0000269" key="9">
    <source>
    </source>
</evidence>
<evidence type="ECO:0000269" key="10">
    <source>
    </source>
</evidence>
<evidence type="ECO:0000269" key="11">
    <source>
    </source>
</evidence>
<evidence type="ECO:0000305" key="12">
    <source>
    </source>
</evidence>
<evidence type="ECO:0000305" key="13">
    <source>
    </source>
</evidence>
<evidence type="ECO:0000305" key="14">
    <source>
    </source>
</evidence>
<evidence type="ECO:0000305" key="15">
    <source>
    </source>
</evidence>
<dbReference type="EMBL" id="J01917">
    <property type="protein sequence ID" value="AAA92205.1"/>
    <property type="molecule type" value="Genomic_DNA"/>
</dbReference>
<dbReference type="PIR" id="B03842">
    <property type="entry name" value="Q4ADA2"/>
</dbReference>
<dbReference type="RefSeq" id="AP_000165.1">
    <property type="nucleotide sequence ID" value="AC_000007.1"/>
</dbReference>
<dbReference type="RefSeq" id="NP_040515.1">
    <property type="nucleotide sequence ID" value="NC_001405.1"/>
</dbReference>
<dbReference type="GeneID" id="5739974"/>
<dbReference type="KEGG" id="vg:5739974"/>
<dbReference type="Proteomes" id="UP000008167">
    <property type="component" value="Segment"/>
</dbReference>
<dbReference type="GO" id="GO:0044196">
    <property type="term" value="C:host cell nucleolus"/>
    <property type="evidence" value="ECO:0007669"/>
    <property type="project" value="UniProtKB-SubCell"/>
</dbReference>
<dbReference type="GO" id="GO:0044095">
    <property type="term" value="C:host cell nucleoplasm"/>
    <property type="evidence" value="ECO:0007669"/>
    <property type="project" value="UniProtKB-SubCell"/>
</dbReference>
<dbReference type="GO" id="GO:0044423">
    <property type="term" value="C:virion component"/>
    <property type="evidence" value="ECO:0007669"/>
    <property type="project" value="UniProtKB-UniRule"/>
</dbReference>
<dbReference type="GO" id="GO:0005524">
    <property type="term" value="F:ATP binding"/>
    <property type="evidence" value="ECO:0000314"/>
    <property type="project" value="UniProtKB"/>
</dbReference>
<dbReference type="GO" id="GO:0003677">
    <property type="term" value="F:DNA binding"/>
    <property type="evidence" value="ECO:0000314"/>
    <property type="project" value="UniProtKB"/>
</dbReference>
<dbReference type="GO" id="GO:0006351">
    <property type="term" value="P:DNA-templated transcription"/>
    <property type="evidence" value="ECO:0007669"/>
    <property type="project" value="UniProtKB-UniRule"/>
</dbReference>
<dbReference type="GO" id="GO:0039708">
    <property type="term" value="P:nuclear capsid assembly"/>
    <property type="evidence" value="ECO:0000314"/>
    <property type="project" value="UniProtKB"/>
</dbReference>
<dbReference type="GO" id="GO:0006355">
    <property type="term" value="P:regulation of DNA-templated transcription"/>
    <property type="evidence" value="ECO:0007669"/>
    <property type="project" value="UniProtKB-UniRule"/>
</dbReference>
<dbReference type="GO" id="GO:0019073">
    <property type="term" value="P:viral DNA genome packaging"/>
    <property type="evidence" value="ECO:0000315"/>
    <property type="project" value="UniProtKB"/>
</dbReference>
<dbReference type="GO" id="GO:0098035">
    <property type="term" value="P:viral DNA genome packaging via site-specific sequence recognition"/>
    <property type="evidence" value="ECO:0000314"/>
    <property type="project" value="UniProtKB"/>
</dbReference>
<dbReference type="GO" id="GO:0019076">
    <property type="term" value="P:viral release from host cell"/>
    <property type="evidence" value="ECO:0007669"/>
    <property type="project" value="UniProtKB-UniRule"/>
</dbReference>
<dbReference type="GO" id="GO:0019083">
    <property type="term" value="P:viral transcription"/>
    <property type="evidence" value="ECO:0007669"/>
    <property type="project" value="UniProtKB-UniRule"/>
</dbReference>
<dbReference type="HAMAP" id="MF_04057">
    <property type="entry name" value="ADV_PKG1"/>
    <property type="match status" value="1"/>
</dbReference>
<dbReference type="InterPro" id="IPR003389">
    <property type="entry name" value="Adeno_IVa2"/>
</dbReference>
<dbReference type="InterPro" id="IPR027417">
    <property type="entry name" value="P-loop_NTPase"/>
</dbReference>
<dbReference type="Pfam" id="PF02456">
    <property type="entry name" value="Adeno_IVa2"/>
    <property type="match status" value="1"/>
</dbReference>
<dbReference type="SUPFAM" id="SSF52540">
    <property type="entry name" value="P-loop containing nucleoside triphosphate hydrolases"/>
    <property type="match status" value="1"/>
</dbReference>
<reference key="1">
    <citation type="journal article" date="1982" name="J. Biol. Chem.">
        <title>Nucleotide sequences from the adenovirus-2 genome.</title>
        <authorList>
            <person name="Gingeras T.R."/>
            <person name="Sciaky D."/>
            <person name="Gelinas R.E."/>
            <person name="Bing-Dong J."/>
            <person name="Yen C.E."/>
            <person name="Kelly M.M."/>
            <person name="Bullock P.A."/>
            <person name="Parsons B.L."/>
            <person name="O'Neill K.E."/>
            <person name="Roberts R.J."/>
        </authorList>
    </citation>
    <scope>NUCLEOTIDE SEQUENCE [GENOMIC DNA]</scope>
</reference>
<reference key="2">
    <citation type="journal article" date="1996" name="J. Virol.">
        <title>Properties of the adenovirus IVa2 gene product, an effector of late-phase-dependent activation of the major late promoter.</title>
        <authorList>
            <person name="Lutz P."/>
            <person name="Kedinger C."/>
        </authorList>
    </citation>
    <scope>SUBUNIT</scope>
    <scope>SUBCELLULAR LOCATION</scope>
    <scope>FUNCTION</scope>
</reference>
<reference key="3">
    <citation type="journal article" date="2004" name="Virology">
        <title>Adenovirus IVa2 protein plays an important role in transcription from the major late promoter in vivo.</title>
        <authorList>
            <person name="Pardo-Mateos A."/>
            <person name="Young C.S."/>
        </authorList>
    </citation>
    <scope>FUNCTION</scope>
</reference>
<reference key="4">
    <citation type="journal article" date="2005" name="J. Virol.">
        <title>Analysis of the interaction of the adenovirus L1 52/55-kilodalton and IVa2 proteins with the packaging sequence in vivo and in vitro.</title>
        <authorList>
            <person name="Perez-Romero P."/>
            <person name="Tyler R.E."/>
            <person name="Abend J.R."/>
            <person name="Dus M."/>
            <person name="Imperiale M.J."/>
        </authorList>
    </citation>
    <scope>INTERACTION WITH PACKAGING PROTEIN 3</scope>
</reference>
<reference key="5">
    <citation type="journal article" date="2007" name="J. Virol.">
        <title>Formation of a multiple protein complex on the adenovirus packaging sequence by the IVa2 protein.</title>
        <authorList>
            <person name="Tyler R.E."/>
            <person name="Ewing S.G."/>
            <person name="Imperiale M.J."/>
        </authorList>
    </citation>
    <scope>INTERACTION WITH THE PACKAGING SEQUENCE</scope>
</reference>
<reference key="6">
    <citation type="journal article" date="2007" name="J. Virol.">
        <title>Ternary complex formation on the adenovirus packaging sequence by the IVa2 and L4 22-kilodalton proteins.</title>
        <authorList>
            <person name="Ewing S.G."/>
            <person name="Byrd S.A."/>
            <person name="Christensen J.B."/>
            <person name="Tyler R.E."/>
            <person name="Imperiale M.J."/>
        </authorList>
    </citation>
    <scope>INTERACTION WITH PACKAGING PROTEIN 2</scope>
</reference>
<reference key="7">
    <citation type="journal article" date="2008" name="J. Virol.">
        <title>Adenovirus IVa2 protein binds ATP.</title>
        <authorList>
            <person name="Ostapchuk P."/>
            <person name="Hearing P."/>
        </authorList>
    </citation>
    <scope>ATP-BINDING</scope>
</reference>
<reference key="8">
    <citation type="journal article" date="2008" name="J. Virol.">
        <title>Presence of the adenovirus IVa2 protein at a single vertex of the mature virion.</title>
        <authorList>
            <person name="Christensen J.B."/>
            <person name="Byrd S.A."/>
            <person name="Walker A.K."/>
            <person name="Strahler J.R."/>
            <person name="Andrews P.C."/>
            <person name="Imperiale M.J."/>
        </authorList>
    </citation>
    <scope>FUNCTION</scope>
    <scope>SUBCELLULAR LOCATION</scope>
</reference>
<reference key="9">
    <citation type="journal article" date="2010" name="Virus Res.">
        <title>Adenovirus L4-22K stimulates major late transcription by a mechanism requiring the intragenic late-specific transcription factor-binding site.</title>
        <authorList>
            <person name="Backstrom E."/>
            <person name="Kaufmann K.B."/>
            <person name="Lan X."/>
            <person name="Akusjarvi G."/>
        </authorList>
    </citation>
    <scope>FUNCTION</scope>
</reference>
<reference key="10">
    <citation type="journal article" date="2011" name="J. Virol.">
        <title>Characterization of empty adenovirus particles assembled in the absence of a functional adenovirus IVa2 protein.</title>
        <authorList>
            <person name="Ostapchuk P."/>
            <person name="Almond M."/>
            <person name="Hearing P."/>
        </authorList>
    </citation>
    <scope>DISRUPTION PHENOTYPE</scope>
</reference>
<reference key="11">
    <citation type="journal article" date="2012" name="Virology">
        <title>Identification and characterization of a DNA binding domain on the adenovirus IVa2 protein.</title>
        <authorList>
            <person name="Christensen J.B."/>
            <person name="Ewing S.G."/>
            <person name="Imperiale M.J."/>
        </authorList>
    </citation>
    <scope>DNA-BINDING</scope>
</reference>
<reference key="12">
    <citation type="journal article" date="2012" name="Viruses">
        <title>Latest insights on adenovirus structure and assembly.</title>
        <authorList>
            <person name="San Martin C."/>
        </authorList>
    </citation>
    <scope>REVIEW</scope>
</reference>
<accession>P03272</accession>
<organismHost>
    <name type="scientific">Homo sapiens</name>
    <name type="common">Human</name>
    <dbReference type="NCBI Taxonomy" id="9606"/>
</organismHost>
<sequence length="449" mass="50881">METRGRRPAALQHQQDQPQAHPGQRAARSAPLHRDPDYADEDPAPVERHDPGPSGRAPTTAVQRKPPQPAKRGDMLDRDAVEHVTELWDRLELLGQTLKSMPTADGLKPLKNFASLQELLSLGGERLLAHLVRENMQVRDMLNEVAPLLRDDGSCSSLNYQLQPVIGVIYGPTGCGKSQLLRNLLSSQLISPTPETVFFIAPQVDMIPPSELKAWEMQICEGNYAPGPDGTIIPQSGTLRPRFVKMAYDDLILEHNYDVSDPRNIFAQAAARGPIAIIMDECMENLGGHKGVSKFFHAFPSKLHDKFPKCTGYTVLVVLHNMNPRRDMAGNIANLKIQSKMHLISPRMHPSQLNRFVNTYTKGLPLAISLLLKDIFRHHAQRSCYDWIIYNTTPQHEALQWCYLHPRDGLMPMYLNIQSHLYHVLEKIHRTLNDRDRWSRAYRARKTPK</sequence>
<comment type="function">
    <text evidence="2 12 13 14 15">Component of the packaging machinery which encapsidates the viral DNA into preformed capsids and transcriptional activator of the viral major late promoter (MLP). Binds, along with packaging proteins 2 and 3, to the specific packaging sequence on the left end of viral genomic DNA and displays ATPase activity thereby providing the power stroke of the packaging machinery. The activity of packaging protein IVa2 is stimulated by protein 33K which acts as a terminase. May be the protein that pumps DNA into the capsid powered by ATP hydrolysis. Specifically binds to the 5'-CG-3' nucleotides of the repeats making up the packaging sequence. Component of the DEF-A and DEF-B transcription factors that bind downstream elements of the major late promoter (MLP), and stimulate transcription from the MLP after initiation of viral DNA replication. DEF-A is a heterodimer packaging proteins 1 and 2 and DEF-B is a homodimer of packaging protein 1.</text>
</comment>
<comment type="subunit">
    <text evidence="1 2 4 5 6 11">Homodimer (PubMed:8627656). Part of a genome packaging complex composed of packaging proteins 1, 2 and 3; this complex specifically binds to the packaging sequence on the left end of viral genomic DNA and performs packaging of the viral genome (PubMed:15681437, PubMed:17804492). Interacts with protein 33K (By similarity).</text>
</comment>
<comment type="subcellular location">
    <subcellularLocation>
        <location evidence="2 7">Virion</location>
    </subcellularLocation>
    <subcellularLocation>
        <location evidence="2 11">Host nucleus</location>
        <location evidence="2 11">Host nucleoplasm</location>
    </subcellularLocation>
    <subcellularLocation>
        <location evidence="2 11">Host nucleus</location>
        <location evidence="2 11">Host nucleolus</location>
    </subcellularLocation>
    <text evidence="2 7">Located at a unique vertex of the capsid. Present in about 6-8 copies per virion.</text>
</comment>
<comment type="induction">
    <text evidence="2">Expressed in the intermediate phase of the viral replicative cycle.</text>
</comment>
<comment type="disruption phenotype">
    <text evidence="9">Empty capsids are produced in the absence of packaging protein 1.</text>
</comment>
<comment type="similarity">
    <text evidence="2">Belongs to the adenoviridae packaging protein 1 family.</text>
</comment>
<feature type="chain" id="PRO_0000221883" description="Packaging protein 1">
    <location>
        <begin position="1"/>
        <end position="449"/>
    </location>
</feature>
<feature type="region of interest" description="Disordered" evidence="3">
    <location>
        <begin position="1"/>
        <end position="77"/>
    </location>
</feature>
<feature type="region of interest" description="DNA-binding" evidence="2 10">
    <location>
        <begin position="440"/>
        <end position="449"/>
    </location>
</feature>
<feature type="binding site" evidence="2 8">
    <location>
        <begin position="171"/>
        <end position="178"/>
    </location>
    <ligand>
        <name>ATP</name>
        <dbReference type="ChEBI" id="CHEBI:30616"/>
    </ligand>
</feature>
<gene>
    <name evidence="2" type="primary">IVa2</name>
</gene>
<proteinExistence type="evidence at protein level"/>
<keyword id="KW-0010">Activator</keyword>
<keyword id="KW-0067">ATP-binding</keyword>
<keyword id="KW-0238">DNA-binding</keyword>
<keyword id="KW-1048">Host nucleus</keyword>
<keyword id="KW-0547">Nucleotide-binding</keyword>
<keyword id="KW-0597">Phosphoprotein</keyword>
<keyword id="KW-1185">Reference proteome</keyword>
<keyword id="KW-0804">Transcription</keyword>
<keyword id="KW-0805">Transcription regulation</keyword>
<keyword id="KW-0231">Viral genome packaging</keyword>
<keyword id="KW-1188">Viral release from host cell</keyword>
<keyword id="KW-0946">Virion</keyword>
<organism>
    <name type="scientific">Human adenovirus C serotype 2</name>
    <name type="common">HAdV-2</name>
    <name type="synonym">Human adenovirus 2</name>
    <dbReference type="NCBI Taxonomy" id="10515"/>
    <lineage>
        <taxon>Viruses</taxon>
        <taxon>Varidnaviria</taxon>
        <taxon>Bamfordvirae</taxon>
        <taxon>Preplasmiviricota</taxon>
        <taxon>Tectiliviricetes</taxon>
        <taxon>Rowavirales</taxon>
        <taxon>Adenoviridae</taxon>
        <taxon>Mastadenovirus</taxon>
        <taxon>Human mastadenovirus C</taxon>
    </lineage>
</organism>
<protein>
    <recommendedName>
        <fullName evidence="2">Packaging protein 1</fullName>
    </recommendedName>
    <alternativeName>
        <fullName evidence="2">Packaging protein IVa2</fullName>
    </alternativeName>
</protein>
<name>PKG1_ADE02</name>